<protein>
    <recommendedName>
        <fullName>Acidic phospholipase A2 Vur-PL3</fullName>
        <shortName>svPLA2</shortName>
        <ecNumber>3.1.1.4</ecNumber>
    </recommendedName>
    <alternativeName>
        <fullName>Phosphatidylcholine 2-acylhydrolase</fullName>
    </alternativeName>
</protein>
<reference key="1">
    <citation type="journal article" date="2011" name="Toxicon">
        <title>cDNA cloning, structural, and functional analyses of venom phospholipases A and a Kunitz-type protease inhibitor from steppe viper Vipera ursinii renardi.</title>
        <authorList>
            <person name="Tsai I.-H."/>
            <person name="Wang Y.M."/>
            <person name="Cheng A.C."/>
            <person name="Starkov V."/>
            <person name="Osipov A."/>
            <person name="Nikitin I."/>
            <person name="Makarova Y."/>
            <person name="Ziganshin R."/>
            <person name="Utkin Y."/>
        </authorList>
    </citation>
    <scope>NUCLEOTIDE SEQUENCE [MRNA]</scope>
    <scope>MASS SPECTROMETRY</scope>
    <source>
        <tissue>Venom</tissue>
        <tissue>Venom gland</tissue>
    </source>
</reference>
<organism>
    <name type="scientific">Vipera renardi</name>
    <name type="common">Steppe viper</name>
    <name type="synonym">Vipera ursinii renardi</name>
    <dbReference type="NCBI Taxonomy" id="927686"/>
    <lineage>
        <taxon>Eukaryota</taxon>
        <taxon>Metazoa</taxon>
        <taxon>Chordata</taxon>
        <taxon>Craniata</taxon>
        <taxon>Vertebrata</taxon>
        <taxon>Euteleostomi</taxon>
        <taxon>Lepidosauria</taxon>
        <taxon>Squamata</taxon>
        <taxon>Bifurcata</taxon>
        <taxon>Unidentata</taxon>
        <taxon>Episquamata</taxon>
        <taxon>Toxicofera</taxon>
        <taxon>Serpentes</taxon>
        <taxon>Colubroidea</taxon>
        <taxon>Viperidae</taxon>
        <taxon>Viperinae</taxon>
        <taxon>Vipera</taxon>
    </lineage>
</organism>
<evidence type="ECO:0000250" key="1"/>
<evidence type="ECO:0000255" key="2">
    <source>
        <dbReference type="PROSITE-ProRule" id="PRU10035"/>
    </source>
</evidence>
<evidence type="ECO:0000255" key="3">
    <source>
        <dbReference type="PROSITE-ProRule" id="PRU10036"/>
    </source>
</evidence>
<evidence type="ECO:0000269" key="4">
    <source>
    </source>
</evidence>
<evidence type="ECO:0000305" key="5"/>
<name>PA2A3_VIPRE</name>
<sequence>MRTLWIVAVCLIGVEGNLFQFGKMIKYKTGKSALLSYSAYGCYCGWGGQGKPQDPTDRCCFVHDCCYGRVNGCNPKMDTYSYSFLNGDIVCGDDDPCLRAICECDRAAAICFGENVNTYDKKYKYYSSSHCTETEQC</sequence>
<proteinExistence type="evidence at protein level"/>
<dbReference type="EC" id="3.1.1.4"/>
<dbReference type="EMBL" id="GQ304905">
    <property type="protein sequence ID" value="ADG86229.1"/>
    <property type="molecule type" value="mRNA"/>
</dbReference>
<dbReference type="SMR" id="F8QN51"/>
<dbReference type="GO" id="GO:0005576">
    <property type="term" value="C:extracellular region"/>
    <property type="evidence" value="ECO:0007669"/>
    <property type="project" value="UniProtKB-SubCell"/>
</dbReference>
<dbReference type="GO" id="GO:0005509">
    <property type="term" value="F:calcium ion binding"/>
    <property type="evidence" value="ECO:0007669"/>
    <property type="project" value="InterPro"/>
</dbReference>
<dbReference type="GO" id="GO:0047498">
    <property type="term" value="F:calcium-dependent phospholipase A2 activity"/>
    <property type="evidence" value="ECO:0007669"/>
    <property type="project" value="TreeGrafter"/>
</dbReference>
<dbReference type="GO" id="GO:0005543">
    <property type="term" value="F:phospholipid binding"/>
    <property type="evidence" value="ECO:0007669"/>
    <property type="project" value="TreeGrafter"/>
</dbReference>
<dbReference type="GO" id="GO:0090729">
    <property type="term" value="F:toxin activity"/>
    <property type="evidence" value="ECO:0007669"/>
    <property type="project" value="UniProtKB-KW"/>
</dbReference>
<dbReference type="GO" id="GO:0050482">
    <property type="term" value="P:arachidonate secretion"/>
    <property type="evidence" value="ECO:0007669"/>
    <property type="project" value="InterPro"/>
</dbReference>
<dbReference type="GO" id="GO:0016042">
    <property type="term" value="P:lipid catabolic process"/>
    <property type="evidence" value="ECO:0007669"/>
    <property type="project" value="UniProtKB-KW"/>
</dbReference>
<dbReference type="GO" id="GO:0006644">
    <property type="term" value="P:phospholipid metabolic process"/>
    <property type="evidence" value="ECO:0007669"/>
    <property type="project" value="InterPro"/>
</dbReference>
<dbReference type="CDD" id="cd00125">
    <property type="entry name" value="PLA2c"/>
    <property type="match status" value="1"/>
</dbReference>
<dbReference type="FunFam" id="1.20.90.10:FF:000001">
    <property type="entry name" value="Basic phospholipase A2 homolog"/>
    <property type="match status" value="1"/>
</dbReference>
<dbReference type="Gene3D" id="1.20.90.10">
    <property type="entry name" value="Phospholipase A2 domain"/>
    <property type="match status" value="1"/>
</dbReference>
<dbReference type="InterPro" id="IPR001211">
    <property type="entry name" value="PLipase_A2"/>
</dbReference>
<dbReference type="InterPro" id="IPR033112">
    <property type="entry name" value="PLipase_A2_Asp_AS"/>
</dbReference>
<dbReference type="InterPro" id="IPR016090">
    <property type="entry name" value="PLipase_A2_dom"/>
</dbReference>
<dbReference type="InterPro" id="IPR036444">
    <property type="entry name" value="PLipase_A2_dom_sf"/>
</dbReference>
<dbReference type="InterPro" id="IPR033113">
    <property type="entry name" value="PLipase_A2_His_AS"/>
</dbReference>
<dbReference type="PANTHER" id="PTHR11716:SF101">
    <property type="entry name" value="BASIC PHOSPHOLIPASE A2 PA-11-LIKE"/>
    <property type="match status" value="1"/>
</dbReference>
<dbReference type="PANTHER" id="PTHR11716">
    <property type="entry name" value="PHOSPHOLIPASE A2 FAMILY MEMBER"/>
    <property type="match status" value="1"/>
</dbReference>
<dbReference type="Pfam" id="PF00068">
    <property type="entry name" value="Phospholip_A2_1"/>
    <property type="match status" value="1"/>
</dbReference>
<dbReference type="PRINTS" id="PR00389">
    <property type="entry name" value="PHPHLIPASEA2"/>
</dbReference>
<dbReference type="SMART" id="SM00085">
    <property type="entry name" value="PA2c"/>
    <property type="match status" value="1"/>
</dbReference>
<dbReference type="SUPFAM" id="SSF48619">
    <property type="entry name" value="Phospholipase A2, PLA2"/>
    <property type="match status" value="1"/>
</dbReference>
<dbReference type="PROSITE" id="PS00119">
    <property type="entry name" value="PA2_ASP"/>
    <property type="match status" value="1"/>
</dbReference>
<dbReference type="PROSITE" id="PS00118">
    <property type="entry name" value="PA2_HIS"/>
    <property type="match status" value="1"/>
</dbReference>
<accession>F8QN51</accession>
<comment type="catalytic activity">
    <reaction evidence="2 3">
        <text>a 1,2-diacyl-sn-glycero-3-phosphocholine + H2O = a 1-acyl-sn-glycero-3-phosphocholine + a fatty acid + H(+)</text>
        <dbReference type="Rhea" id="RHEA:15801"/>
        <dbReference type="ChEBI" id="CHEBI:15377"/>
        <dbReference type="ChEBI" id="CHEBI:15378"/>
        <dbReference type="ChEBI" id="CHEBI:28868"/>
        <dbReference type="ChEBI" id="CHEBI:57643"/>
        <dbReference type="ChEBI" id="CHEBI:58168"/>
        <dbReference type="EC" id="3.1.1.4"/>
    </reaction>
</comment>
<comment type="cofactor">
    <cofactor evidence="1">
        <name>Ca(2+)</name>
        <dbReference type="ChEBI" id="CHEBI:29108"/>
    </cofactor>
    <text evidence="1">Binds 1 Ca(2+) ion.</text>
</comment>
<comment type="subcellular location">
    <subcellularLocation>
        <location>Secreted</location>
    </subcellularLocation>
</comment>
<comment type="tissue specificity">
    <text>Expressed by the venom gland.</text>
</comment>
<comment type="mass spectrometry"/>
<comment type="similarity">
    <text evidence="5">Belongs to the phospholipase A2 family. Group II subfamily. D49 sub-subfamily.</text>
</comment>
<feature type="signal peptide">
    <location>
        <begin position="1"/>
        <end position="16"/>
    </location>
</feature>
<feature type="chain" id="PRO_0000419640" description="Acidic phospholipase A2 Vur-PL3">
    <location>
        <begin position="17"/>
        <end position="137"/>
    </location>
</feature>
<feature type="active site" evidence="1">
    <location>
        <position position="63"/>
    </location>
</feature>
<feature type="active site" evidence="1">
    <location>
        <position position="105"/>
    </location>
</feature>
<feature type="binding site" evidence="1">
    <location>
        <position position="43"/>
    </location>
    <ligand>
        <name>Ca(2+)</name>
        <dbReference type="ChEBI" id="CHEBI:29108"/>
    </ligand>
</feature>
<feature type="binding site" evidence="1">
    <location>
        <position position="45"/>
    </location>
    <ligand>
        <name>Ca(2+)</name>
        <dbReference type="ChEBI" id="CHEBI:29108"/>
    </ligand>
</feature>
<feature type="binding site" evidence="1">
    <location>
        <position position="47"/>
    </location>
    <ligand>
        <name>Ca(2+)</name>
        <dbReference type="ChEBI" id="CHEBI:29108"/>
    </ligand>
</feature>
<feature type="binding site" evidence="1">
    <location>
        <position position="64"/>
    </location>
    <ligand>
        <name>Ca(2+)</name>
        <dbReference type="ChEBI" id="CHEBI:29108"/>
    </ligand>
</feature>
<feature type="disulfide bond" evidence="1">
    <location>
        <begin position="42"/>
        <end position="131"/>
    </location>
</feature>
<feature type="disulfide bond" evidence="1">
    <location>
        <begin position="44"/>
        <end position="60"/>
    </location>
</feature>
<feature type="disulfide bond" evidence="1">
    <location>
        <begin position="59"/>
        <end position="111"/>
    </location>
</feature>
<feature type="disulfide bond" evidence="1">
    <location>
        <begin position="65"/>
        <end position="137"/>
    </location>
</feature>
<feature type="disulfide bond" evidence="1">
    <location>
        <begin position="66"/>
        <end position="104"/>
    </location>
</feature>
<feature type="disulfide bond" evidence="1">
    <location>
        <begin position="73"/>
        <end position="97"/>
    </location>
</feature>
<feature type="disulfide bond" evidence="1">
    <location>
        <begin position="91"/>
        <end position="102"/>
    </location>
</feature>
<keyword id="KW-1015">Disulfide bond</keyword>
<keyword id="KW-0378">Hydrolase</keyword>
<keyword id="KW-0442">Lipid degradation</keyword>
<keyword id="KW-0443">Lipid metabolism</keyword>
<keyword id="KW-0479">Metal-binding</keyword>
<keyword id="KW-0964">Secreted</keyword>
<keyword id="KW-0732">Signal</keyword>
<keyword id="KW-0800">Toxin</keyword>